<evidence type="ECO:0000255" key="1"/>
<evidence type="ECO:0000305" key="2"/>
<protein>
    <recommendedName>
        <fullName>Attacin-A</fullName>
    </recommendedName>
</protein>
<proteinExistence type="inferred from homology"/>
<organism>
    <name type="scientific">Trichoplusia ni</name>
    <name type="common">Cabbage looper</name>
    <dbReference type="NCBI Taxonomy" id="7111"/>
    <lineage>
        <taxon>Eukaryota</taxon>
        <taxon>Metazoa</taxon>
        <taxon>Ecdysozoa</taxon>
        <taxon>Arthropoda</taxon>
        <taxon>Hexapoda</taxon>
        <taxon>Insecta</taxon>
        <taxon>Pterygota</taxon>
        <taxon>Neoptera</taxon>
        <taxon>Endopterygota</taxon>
        <taxon>Lepidoptera</taxon>
        <taxon>Glossata</taxon>
        <taxon>Ditrysia</taxon>
        <taxon>Noctuoidea</taxon>
        <taxon>Noctuidae</taxon>
        <taxon>Plusiinae</taxon>
        <taxon>Trichoplusia</taxon>
    </lineage>
</organism>
<reference key="1">
    <citation type="journal article" date="1996" name="Gene">
        <title>Trichoplusia ni attacin A, a differentially displayed insect gene coding for an antibacterial protein.</title>
        <authorList>
            <person name="Kang D."/>
            <person name="Lundstroem A."/>
            <person name="Steiner H."/>
        </authorList>
    </citation>
    <scope>NUCLEOTIDE SEQUENCE [GENOMIC DNA]</scope>
</reference>
<feature type="signal peptide" evidence="1">
    <location>
        <begin position="1"/>
        <end position="18"/>
    </location>
</feature>
<feature type="propeptide" id="PRO_0000004905" evidence="1">
    <location>
        <begin position="19"/>
        <end position="62"/>
    </location>
</feature>
<feature type="chain" id="PRO_0000004906" description="Attacin-A">
    <location>
        <begin position="63"/>
        <end position="254"/>
    </location>
</feature>
<keyword id="KW-0044">Antibiotic</keyword>
<keyword id="KW-0929">Antimicrobial</keyword>
<keyword id="KW-0165">Cleavage on pair of basic residues</keyword>
<keyword id="KW-0391">Immunity</keyword>
<keyword id="KW-0399">Innate immunity</keyword>
<keyword id="KW-1185">Reference proteome</keyword>
<keyword id="KW-0964">Secreted</keyword>
<keyword id="KW-0732">Signal</keyword>
<name>ATTA_TRINI</name>
<accession>P50725</accession>
<sequence>MFTYKLILGLVLVVSASARYLVFEDLEGESYLVPNQAEDEQVLEGEPFYENAVQLASPRVRRQAQGSVTLNSDGSMGLGAKVPIVGNEKNVLSALGSVDLNDQLKPASRGMGLALDNVNGHGLSVMKETVPGFGDRLTGAGRVNVFHNDNHDISAKAFVTKNMPDFPNVPNFNTVGGGVDYMYKNKVGASLGMANTPFLDRKDYSAMGNLNVFRSPTTSVDFNAGFKKFDTPVFKSNWEPNFGLTFSRSFGNKW</sequence>
<dbReference type="EMBL" id="U46130">
    <property type="protein sequence ID" value="AAC47327.1"/>
    <property type="molecule type" value="Genomic_DNA"/>
</dbReference>
<dbReference type="PIR" id="JC5004">
    <property type="entry name" value="JC5004"/>
</dbReference>
<dbReference type="FunCoup" id="P50725">
    <property type="interactions" value="34"/>
</dbReference>
<dbReference type="InParanoid" id="P50725"/>
<dbReference type="Proteomes" id="UP000322000">
    <property type="component" value="Unplaced"/>
</dbReference>
<dbReference type="GO" id="GO:0005576">
    <property type="term" value="C:extracellular region"/>
    <property type="evidence" value="ECO:0007669"/>
    <property type="project" value="UniProtKB-SubCell"/>
</dbReference>
<dbReference type="GO" id="GO:0042742">
    <property type="term" value="P:defense response to bacterium"/>
    <property type="evidence" value="ECO:0007669"/>
    <property type="project" value="UniProtKB-KW"/>
</dbReference>
<dbReference type="GO" id="GO:0045087">
    <property type="term" value="P:innate immune response"/>
    <property type="evidence" value="ECO:0007669"/>
    <property type="project" value="UniProtKB-KW"/>
</dbReference>
<dbReference type="InterPro" id="IPR005521">
    <property type="entry name" value="Attacin_C"/>
</dbReference>
<dbReference type="InterPro" id="IPR005520">
    <property type="entry name" value="Attacin_N"/>
</dbReference>
<dbReference type="Pfam" id="PF03769">
    <property type="entry name" value="Attacin_C"/>
    <property type="match status" value="1"/>
</dbReference>
<dbReference type="Pfam" id="PF03768">
    <property type="entry name" value="Attacin_N"/>
    <property type="match status" value="1"/>
</dbReference>
<comment type="function">
    <text>Hemolymph antibacterial protein.</text>
</comment>
<comment type="subcellular location">
    <subcellularLocation>
        <location>Secreted</location>
    </subcellularLocation>
</comment>
<comment type="similarity">
    <text evidence="2">Belongs to the attacin/sarcotoxin-2 family.</text>
</comment>